<name>TRPB_YERPY</name>
<keyword id="KW-0028">Amino-acid biosynthesis</keyword>
<keyword id="KW-0057">Aromatic amino acid biosynthesis</keyword>
<keyword id="KW-0456">Lyase</keyword>
<keyword id="KW-0663">Pyridoxal phosphate</keyword>
<keyword id="KW-0822">Tryptophan biosynthesis</keyword>
<protein>
    <recommendedName>
        <fullName evidence="1">Tryptophan synthase beta chain</fullName>
        <ecNumber evidence="1">4.2.1.20</ecNumber>
    </recommendedName>
</protein>
<organism>
    <name type="scientific">Yersinia pseudotuberculosis serotype O:3 (strain YPIII)</name>
    <dbReference type="NCBI Taxonomy" id="502800"/>
    <lineage>
        <taxon>Bacteria</taxon>
        <taxon>Pseudomonadati</taxon>
        <taxon>Pseudomonadota</taxon>
        <taxon>Gammaproteobacteria</taxon>
        <taxon>Enterobacterales</taxon>
        <taxon>Yersiniaceae</taxon>
        <taxon>Yersinia</taxon>
    </lineage>
</organism>
<gene>
    <name evidence="1" type="primary">trpB</name>
    <name type="ordered locus">YPK_2046</name>
</gene>
<feature type="chain" id="PRO_1000095842" description="Tryptophan synthase beta chain">
    <location>
        <begin position="1"/>
        <end position="396"/>
    </location>
</feature>
<feature type="modified residue" description="N6-(pyridoxal phosphate)lysine" evidence="1">
    <location>
        <position position="86"/>
    </location>
</feature>
<reference key="1">
    <citation type="submission" date="2008-02" db="EMBL/GenBank/DDBJ databases">
        <title>Complete sequence of Yersinia pseudotuberculosis YPIII.</title>
        <authorList>
            <consortium name="US DOE Joint Genome Institute"/>
            <person name="Copeland A."/>
            <person name="Lucas S."/>
            <person name="Lapidus A."/>
            <person name="Glavina del Rio T."/>
            <person name="Dalin E."/>
            <person name="Tice H."/>
            <person name="Bruce D."/>
            <person name="Goodwin L."/>
            <person name="Pitluck S."/>
            <person name="Munk A.C."/>
            <person name="Brettin T."/>
            <person name="Detter J.C."/>
            <person name="Han C."/>
            <person name="Tapia R."/>
            <person name="Schmutz J."/>
            <person name="Larimer F."/>
            <person name="Land M."/>
            <person name="Hauser L."/>
            <person name="Challacombe J.F."/>
            <person name="Green L."/>
            <person name="Lindler L.E."/>
            <person name="Nikolich M.P."/>
            <person name="Richardson P."/>
        </authorList>
    </citation>
    <scope>NUCLEOTIDE SEQUENCE [LARGE SCALE GENOMIC DNA]</scope>
    <source>
        <strain>YPIII</strain>
    </source>
</reference>
<proteinExistence type="inferred from homology"/>
<dbReference type="EC" id="4.2.1.20" evidence="1"/>
<dbReference type="EMBL" id="CP000950">
    <property type="protein sequence ID" value="ACA68333.1"/>
    <property type="molecule type" value="Genomic_DNA"/>
</dbReference>
<dbReference type="RefSeq" id="WP_002210633.1">
    <property type="nucleotide sequence ID" value="NZ_CP009792.1"/>
</dbReference>
<dbReference type="SMR" id="B1JKS2"/>
<dbReference type="GeneID" id="57976463"/>
<dbReference type="KEGG" id="ypy:YPK_2046"/>
<dbReference type="PATRIC" id="fig|502800.11.peg.2724"/>
<dbReference type="UniPathway" id="UPA00035">
    <property type="reaction ID" value="UER00044"/>
</dbReference>
<dbReference type="GO" id="GO:0005737">
    <property type="term" value="C:cytoplasm"/>
    <property type="evidence" value="ECO:0007669"/>
    <property type="project" value="TreeGrafter"/>
</dbReference>
<dbReference type="GO" id="GO:0004834">
    <property type="term" value="F:tryptophan synthase activity"/>
    <property type="evidence" value="ECO:0007669"/>
    <property type="project" value="UniProtKB-UniRule"/>
</dbReference>
<dbReference type="CDD" id="cd06446">
    <property type="entry name" value="Trp-synth_B"/>
    <property type="match status" value="1"/>
</dbReference>
<dbReference type="FunFam" id="3.40.50.1100:FF:000001">
    <property type="entry name" value="Tryptophan synthase beta chain"/>
    <property type="match status" value="1"/>
</dbReference>
<dbReference type="FunFam" id="3.40.50.1100:FF:000004">
    <property type="entry name" value="Tryptophan synthase beta chain"/>
    <property type="match status" value="1"/>
</dbReference>
<dbReference type="Gene3D" id="3.40.50.1100">
    <property type="match status" value="2"/>
</dbReference>
<dbReference type="HAMAP" id="MF_00133">
    <property type="entry name" value="Trp_synth_beta"/>
    <property type="match status" value="1"/>
</dbReference>
<dbReference type="InterPro" id="IPR006653">
    <property type="entry name" value="Trp_synth_b_CS"/>
</dbReference>
<dbReference type="InterPro" id="IPR006654">
    <property type="entry name" value="Trp_synth_beta"/>
</dbReference>
<dbReference type="InterPro" id="IPR023026">
    <property type="entry name" value="Trp_synth_beta/beta-like"/>
</dbReference>
<dbReference type="InterPro" id="IPR001926">
    <property type="entry name" value="TrpB-like_PALP"/>
</dbReference>
<dbReference type="InterPro" id="IPR036052">
    <property type="entry name" value="TrpB-like_PALP_sf"/>
</dbReference>
<dbReference type="NCBIfam" id="TIGR00263">
    <property type="entry name" value="trpB"/>
    <property type="match status" value="1"/>
</dbReference>
<dbReference type="PANTHER" id="PTHR48077:SF3">
    <property type="entry name" value="TRYPTOPHAN SYNTHASE"/>
    <property type="match status" value="1"/>
</dbReference>
<dbReference type="PANTHER" id="PTHR48077">
    <property type="entry name" value="TRYPTOPHAN SYNTHASE-RELATED"/>
    <property type="match status" value="1"/>
</dbReference>
<dbReference type="Pfam" id="PF00291">
    <property type="entry name" value="PALP"/>
    <property type="match status" value="1"/>
</dbReference>
<dbReference type="PIRSF" id="PIRSF001413">
    <property type="entry name" value="Trp_syn_beta"/>
    <property type="match status" value="1"/>
</dbReference>
<dbReference type="SUPFAM" id="SSF53686">
    <property type="entry name" value="Tryptophan synthase beta subunit-like PLP-dependent enzymes"/>
    <property type="match status" value="1"/>
</dbReference>
<dbReference type="PROSITE" id="PS00168">
    <property type="entry name" value="TRP_SYNTHASE_BETA"/>
    <property type="match status" value="1"/>
</dbReference>
<comment type="function">
    <text evidence="1">The beta subunit is responsible for the synthesis of L-tryptophan from indole and L-serine.</text>
</comment>
<comment type="catalytic activity">
    <reaction evidence="1">
        <text>(1S,2R)-1-C-(indol-3-yl)glycerol 3-phosphate + L-serine = D-glyceraldehyde 3-phosphate + L-tryptophan + H2O</text>
        <dbReference type="Rhea" id="RHEA:10532"/>
        <dbReference type="ChEBI" id="CHEBI:15377"/>
        <dbReference type="ChEBI" id="CHEBI:33384"/>
        <dbReference type="ChEBI" id="CHEBI:57912"/>
        <dbReference type="ChEBI" id="CHEBI:58866"/>
        <dbReference type="ChEBI" id="CHEBI:59776"/>
        <dbReference type="EC" id="4.2.1.20"/>
    </reaction>
</comment>
<comment type="cofactor">
    <cofactor evidence="1">
        <name>pyridoxal 5'-phosphate</name>
        <dbReference type="ChEBI" id="CHEBI:597326"/>
    </cofactor>
</comment>
<comment type="pathway">
    <text evidence="1">Amino-acid biosynthesis; L-tryptophan biosynthesis; L-tryptophan from chorismate: step 5/5.</text>
</comment>
<comment type="subunit">
    <text evidence="1">Tetramer of two alpha and two beta chains.</text>
</comment>
<comment type="similarity">
    <text evidence="1">Belongs to the TrpB family.</text>
</comment>
<accession>B1JKS2</accession>
<sequence>MTTLNPYFGEFGGMYVPQILVPALKQLEDAFVSAQLDPEFQAAFQDLLKNYAGRPTALTLCQNLTKGTKTKLYLKREDLLHGGAHKTNQVLGQALLAKRMGKTEIIAETGAGQHGVASALACALLGLKCRIYMGAKDIERQSPNVFRMRLMGAEVIPVHSGSSTLKDACNEALRDWSGTYETAHYMLGTAAGPHPYPTIVREFQRMIGEETKAQILEKEGRLPDAVLACVGGGSNAIGMFADFIDEPDVGLIGVEPAGLGIETGQHGAPLKHGKVGIYFGMKSPMMQTSDGQIEESYSISAGLDFPSVGPQHAYLNSIGRADYVSITDDEALDAFKTLSCKEGIIPALESSHALAHALKMIKADPDKEQILVVNLSGRGDKDIFTVHDILKARGEI</sequence>
<evidence type="ECO:0000255" key="1">
    <source>
        <dbReference type="HAMAP-Rule" id="MF_00133"/>
    </source>
</evidence>